<evidence type="ECO:0000255" key="1">
    <source>
        <dbReference type="HAMAP-Rule" id="MF_00574"/>
    </source>
</evidence>
<evidence type="ECO:0000305" key="2"/>
<sequence length="82" mass="8652">MSYEKVLQAGKTVVGTKQTVRALKEGKALEVIVAEDADPSIIDKVMEAAKEANVPVTKVDSMKKLGKACKIQVGAAAVAIIR</sequence>
<reference key="1">
    <citation type="submission" date="2009-06" db="EMBL/GenBank/DDBJ databases">
        <title>Complete sequence of chromosome of Geopacillus sp. WCH70.</title>
        <authorList>
            <consortium name="US DOE Joint Genome Institute"/>
            <person name="Lucas S."/>
            <person name="Copeland A."/>
            <person name="Lapidus A."/>
            <person name="Glavina del Rio T."/>
            <person name="Dalin E."/>
            <person name="Tice H."/>
            <person name="Bruce D."/>
            <person name="Goodwin L."/>
            <person name="Pitluck S."/>
            <person name="Chertkov O."/>
            <person name="Brettin T."/>
            <person name="Detter J.C."/>
            <person name="Han C."/>
            <person name="Larimer F."/>
            <person name="Land M."/>
            <person name="Hauser L."/>
            <person name="Kyrpides N."/>
            <person name="Mikhailova N."/>
            <person name="Brumm P."/>
            <person name="Mead D.A."/>
            <person name="Richardson P."/>
        </authorList>
    </citation>
    <scope>NUCLEOTIDE SEQUENCE [LARGE SCALE GENOMIC DNA]</scope>
    <source>
        <strain>WCH70</strain>
    </source>
</reference>
<comment type="similarity">
    <text evidence="1">Belongs to the eukaryotic ribosomal protein eL8 family.</text>
</comment>
<gene>
    <name type="ordered locus">GWCH70_0105</name>
</gene>
<accession>C5D3R1</accession>
<proteinExistence type="inferred from homology"/>
<organism>
    <name type="scientific">Geobacillus sp. (strain WCH70)</name>
    <dbReference type="NCBI Taxonomy" id="471223"/>
    <lineage>
        <taxon>Bacteria</taxon>
        <taxon>Bacillati</taxon>
        <taxon>Bacillota</taxon>
        <taxon>Bacilli</taxon>
        <taxon>Bacillales</taxon>
        <taxon>Anoxybacillaceae</taxon>
        <taxon>Geobacillus</taxon>
    </lineage>
</organism>
<protein>
    <recommendedName>
        <fullName evidence="1">RNA-binding protein GWCH70_0105</fullName>
    </recommendedName>
    <alternativeName>
        <fullName evidence="2">Putative ribosomal protein L7Ae-like</fullName>
    </alternativeName>
    <alternativeName>
        <fullName evidence="1">Ribosomal protein eL8-like</fullName>
    </alternativeName>
</protein>
<name>RXL7_GEOSW</name>
<dbReference type="EMBL" id="CP001638">
    <property type="protein sequence ID" value="ACS23045.1"/>
    <property type="molecule type" value="Genomic_DNA"/>
</dbReference>
<dbReference type="SMR" id="C5D3R1"/>
<dbReference type="STRING" id="471223.GWCH70_0105"/>
<dbReference type="KEGG" id="gwc:GWCH70_0105"/>
<dbReference type="eggNOG" id="COG1358">
    <property type="taxonomic scope" value="Bacteria"/>
</dbReference>
<dbReference type="HOGENOM" id="CLU_168063_2_0_9"/>
<dbReference type="OrthoDB" id="2353623at2"/>
<dbReference type="GO" id="GO:0003723">
    <property type="term" value="F:RNA binding"/>
    <property type="evidence" value="ECO:0007669"/>
    <property type="project" value="UniProtKB-UniRule"/>
</dbReference>
<dbReference type="Gene3D" id="3.30.1330.30">
    <property type="match status" value="1"/>
</dbReference>
<dbReference type="HAMAP" id="MF_00574">
    <property type="entry name" value="Ribosomal_eL8_Bact"/>
    <property type="match status" value="1"/>
</dbReference>
<dbReference type="InterPro" id="IPR029064">
    <property type="entry name" value="Ribosomal_eL30-like_sf"/>
</dbReference>
<dbReference type="InterPro" id="IPR004038">
    <property type="entry name" value="Ribosomal_eL8/eL30/eS12/Gad45"/>
</dbReference>
<dbReference type="InterPro" id="IPR023460">
    <property type="entry name" value="RNA_bf_YbxF-like"/>
</dbReference>
<dbReference type="NCBIfam" id="NF010125">
    <property type="entry name" value="PRK13602.1"/>
    <property type="match status" value="1"/>
</dbReference>
<dbReference type="Pfam" id="PF01248">
    <property type="entry name" value="Ribosomal_L7Ae"/>
    <property type="match status" value="1"/>
</dbReference>
<dbReference type="SUPFAM" id="SSF55315">
    <property type="entry name" value="L30e-like"/>
    <property type="match status" value="1"/>
</dbReference>
<keyword id="KW-0694">RNA-binding</keyword>
<feature type="chain" id="PRO_1000212090" description="RNA-binding protein GWCH70_0105">
    <location>
        <begin position="1"/>
        <end position="82"/>
    </location>
</feature>